<comment type="function">
    <text evidence="1">Component of the eukaryotic translation initiation factor 3 (eIF-3) complex, which is involved in protein synthesis of a specialized repertoire of mRNAs and, together with other initiation factors, stimulates binding of mRNA and methionyl-tRNAi to the 40S ribosome. The eIF-3 complex specifically targets and initiates translation of a subset of mRNAs involved in cell proliferation.</text>
</comment>
<comment type="subunit">
    <text evidence="1">Component of the eukaryotic translation initiation factor 3 (eIF-3) complex. The eIF-3 complex interacts with pix.</text>
</comment>
<comment type="subcellular location">
    <subcellularLocation>
        <location evidence="1">Cytoplasm</location>
    </subcellularLocation>
</comment>
<comment type="similarity">
    <text evidence="1">Belongs to the eIF-3 subunit F family.</text>
</comment>
<evidence type="ECO:0000255" key="1">
    <source>
        <dbReference type="HAMAP-Rule" id="MF_03005"/>
    </source>
</evidence>
<evidence type="ECO:0000255" key="2">
    <source>
        <dbReference type="PROSITE-ProRule" id="PRU01182"/>
    </source>
</evidence>
<name>EI3F2_DROWI</name>
<protein>
    <recommendedName>
        <fullName evidence="1">Eukaryotic translation initiation factor 3 subunit F-2</fullName>
        <shortName evidence="1">eIF3f-2</shortName>
    </recommendedName>
    <alternativeName>
        <fullName evidence="1">Eukaryotic translation initiation factor 3 subunit 5-2</fullName>
    </alternativeName>
</protein>
<sequence>MQAEFKLRSKILLQPLVLLHIIDAYERRPKDCTQVIGTLLGRNNPESGHLEISNCFTLLHKDYPNSDRIDVDLQYANDMYELNQLTYPQEKIIGWYATGKEVSRSAVNLHEYYARECADGNPMHLLIDTSLRGQRMMMRLYTAVVMGVPNGTKGLMFSLLPVEMSSGNPESVALNLMKKNALQPTKQVGRILPELVQVVDITRDLQTKLDLVLRYVNETLARKRTPNNTVGRALHDALTSVPLVDAESFRMMFNANVRDMLMSITLATMIKAQLKISESVIAMPDL</sequence>
<reference key="1">
    <citation type="journal article" date="2007" name="Nature">
        <title>Evolution of genes and genomes on the Drosophila phylogeny.</title>
        <authorList>
            <consortium name="Drosophila 12 genomes consortium"/>
        </authorList>
    </citation>
    <scope>NUCLEOTIDE SEQUENCE [LARGE SCALE GENOMIC DNA]</scope>
    <source>
        <strain>Tucson 14030-0811.24</strain>
    </source>
</reference>
<feature type="chain" id="PRO_0000364318" description="Eukaryotic translation initiation factor 3 subunit F-2">
    <location>
        <begin position="1"/>
        <end position="286"/>
    </location>
</feature>
<feature type="domain" description="MPN" evidence="2">
    <location>
        <begin position="11"/>
        <end position="147"/>
    </location>
</feature>
<accession>B4MR33</accession>
<proteinExistence type="inferred from homology"/>
<dbReference type="EMBL" id="CH963849">
    <property type="protein sequence ID" value="EDW74572.1"/>
    <property type="molecule type" value="Genomic_DNA"/>
</dbReference>
<dbReference type="SMR" id="B4MR33"/>
<dbReference type="STRING" id="7260.B4MR33"/>
<dbReference type="EnsemblMetazoa" id="FBtr0251985">
    <property type="protein sequence ID" value="FBpp0250477"/>
    <property type="gene ID" value="FBgn0223326"/>
</dbReference>
<dbReference type="EnsemblMetazoa" id="XM_002063550.3">
    <property type="protein sequence ID" value="XP_002063586.1"/>
    <property type="gene ID" value="LOC6639918"/>
</dbReference>
<dbReference type="GeneID" id="6639918"/>
<dbReference type="KEGG" id="dwi:6639918"/>
<dbReference type="CTD" id="35547"/>
<dbReference type="eggNOG" id="KOG2975">
    <property type="taxonomic scope" value="Eukaryota"/>
</dbReference>
<dbReference type="HOGENOM" id="CLU_027018_0_1_1"/>
<dbReference type="OMA" id="IEITNCF"/>
<dbReference type="OrthoDB" id="25498at2759"/>
<dbReference type="PhylomeDB" id="B4MR33"/>
<dbReference type="Proteomes" id="UP000007798">
    <property type="component" value="Unassembled WGS sequence"/>
</dbReference>
<dbReference type="GO" id="GO:0016282">
    <property type="term" value="C:eukaryotic 43S preinitiation complex"/>
    <property type="evidence" value="ECO:0007669"/>
    <property type="project" value="UniProtKB-UniRule"/>
</dbReference>
<dbReference type="GO" id="GO:0033290">
    <property type="term" value="C:eukaryotic 48S preinitiation complex"/>
    <property type="evidence" value="ECO:0007669"/>
    <property type="project" value="UniProtKB-UniRule"/>
</dbReference>
<dbReference type="GO" id="GO:0071541">
    <property type="term" value="C:eukaryotic translation initiation factor 3 complex, eIF3m"/>
    <property type="evidence" value="ECO:0007669"/>
    <property type="project" value="TreeGrafter"/>
</dbReference>
<dbReference type="GO" id="GO:0008237">
    <property type="term" value="F:metallopeptidase activity"/>
    <property type="evidence" value="ECO:0007669"/>
    <property type="project" value="InterPro"/>
</dbReference>
<dbReference type="GO" id="GO:0003743">
    <property type="term" value="F:translation initiation factor activity"/>
    <property type="evidence" value="ECO:0007669"/>
    <property type="project" value="UniProtKB-UniRule"/>
</dbReference>
<dbReference type="GO" id="GO:0031369">
    <property type="term" value="F:translation initiation factor binding"/>
    <property type="evidence" value="ECO:0007669"/>
    <property type="project" value="InterPro"/>
</dbReference>
<dbReference type="GO" id="GO:0001732">
    <property type="term" value="P:formation of cytoplasmic translation initiation complex"/>
    <property type="evidence" value="ECO:0007669"/>
    <property type="project" value="UniProtKB-UniRule"/>
</dbReference>
<dbReference type="CDD" id="cd08064">
    <property type="entry name" value="MPN_eIF3f"/>
    <property type="match status" value="1"/>
</dbReference>
<dbReference type="Gene3D" id="3.40.140.10">
    <property type="entry name" value="Cytidine Deaminase, domain 2"/>
    <property type="match status" value="1"/>
</dbReference>
<dbReference type="HAMAP" id="MF_03005">
    <property type="entry name" value="eIF3f"/>
    <property type="match status" value="1"/>
</dbReference>
<dbReference type="InterPro" id="IPR027531">
    <property type="entry name" value="eIF3f"/>
</dbReference>
<dbReference type="InterPro" id="IPR024969">
    <property type="entry name" value="EIF3F/CSN6-like_C"/>
</dbReference>
<dbReference type="InterPro" id="IPR000555">
    <property type="entry name" value="JAMM/MPN+_dom"/>
</dbReference>
<dbReference type="InterPro" id="IPR037518">
    <property type="entry name" value="MPN"/>
</dbReference>
<dbReference type="PANTHER" id="PTHR10540:SF6">
    <property type="entry name" value="EUKARYOTIC TRANSLATION INITIATION FACTOR 3 SUBUNIT F"/>
    <property type="match status" value="1"/>
</dbReference>
<dbReference type="PANTHER" id="PTHR10540">
    <property type="entry name" value="EUKARYOTIC TRANSLATION INITIATION FACTOR 3 SUBUNIT F-RELATED"/>
    <property type="match status" value="1"/>
</dbReference>
<dbReference type="Pfam" id="PF01398">
    <property type="entry name" value="JAB"/>
    <property type="match status" value="1"/>
</dbReference>
<dbReference type="Pfam" id="PF13012">
    <property type="entry name" value="MitMem_reg"/>
    <property type="match status" value="1"/>
</dbReference>
<dbReference type="SMART" id="SM00232">
    <property type="entry name" value="JAB_MPN"/>
    <property type="match status" value="1"/>
</dbReference>
<dbReference type="PROSITE" id="PS50249">
    <property type="entry name" value="MPN"/>
    <property type="match status" value="1"/>
</dbReference>
<keyword id="KW-0963">Cytoplasm</keyword>
<keyword id="KW-0396">Initiation factor</keyword>
<keyword id="KW-0648">Protein biosynthesis</keyword>
<keyword id="KW-1185">Reference proteome</keyword>
<gene>
    <name evidence="1" type="primary">eIF3f2</name>
    <name evidence="1" type="synonym">eIF3-S5-2</name>
    <name type="ORF">GK21334</name>
</gene>
<organism>
    <name type="scientific">Drosophila willistoni</name>
    <name type="common">Fruit fly</name>
    <dbReference type="NCBI Taxonomy" id="7260"/>
    <lineage>
        <taxon>Eukaryota</taxon>
        <taxon>Metazoa</taxon>
        <taxon>Ecdysozoa</taxon>
        <taxon>Arthropoda</taxon>
        <taxon>Hexapoda</taxon>
        <taxon>Insecta</taxon>
        <taxon>Pterygota</taxon>
        <taxon>Neoptera</taxon>
        <taxon>Endopterygota</taxon>
        <taxon>Diptera</taxon>
        <taxon>Brachycera</taxon>
        <taxon>Muscomorpha</taxon>
        <taxon>Ephydroidea</taxon>
        <taxon>Drosophilidae</taxon>
        <taxon>Drosophila</taxon>
        <taxon>Sophophora</taxon>
    </lineage>
</organism>